<reference key="1">
    <citation type="journal article" date="1993" name="Mol. Biochem. Parasitol.">
        <title>The dihydroorotate dehydrogenase gene homologue of Plasmodium falciparum.</title>
        <authorList>
            <person name="Leblanc S.B."/>
            <person name="Wilson C.M."/>
        </authorList>
    </citation>
    <scope>NUCLEOTIDE SEQUENCE [GENOMIC DNA]</scope>
</reference>
<reference key="2">
    <citation type="journal article" date="2002" name="Nature">
        <title>Genome sequence of the human malaria parasite Plasmodium falciparum.</title>
        <authorList>
            <person name="Gardner M.J."/>
            <person name="Hall N."/>
            <person name="Fung E."/>
            <person name="White O."/>
            <person name="Berriman M."/>
            <person name="Hyman R.W."/>
            <person name="Carlton J.M."/>
            <person name="Pain A."/>
            <person name="Nelson K.E."/>
            <person name="Bowman S."/>
            <person name="Paulsen I.T."/>
            <person name="James K.D."/>
            <person name="Eisen J.A."/>
            <person name="Rutherford K.M."/>
            <person name="Salzberg S.L."/>
            <person name="Craig A."/>
            <person name="Kyes S."/>
            <person name="Chan M.-S."/>
            <person name="Nene V."/>
            <person name="Shallom S.J."/>
            <person name="Suh B."/>
            <person name="Peterson J."/>
            <person name="Angiuoli S."/>
            <person name="Pertea M."/>
            <person name="Allen J."/>
            <person name="Selengut J."/>
            <person name="Haft D."/>
            <person name="Mather M.W."/>
            <person name="Vaidya A.B."/>
            <person name="Martin D.M.A."/>
            <person name="Fairlamb A.H."/>
            <person name="Fraunholz M.J."/>
            <person name="Roos D.S."/>
            <person name="Ralph S.A."/>
            <person name="McFadden G.I."/>
            <person name="Cummings L.M."/>
            <person name="Subramanian G.M."/>
            <person name="Mungall C."/>
            <person name="Venter J.C."/>
            <person name="Carucci D.J."/>
            <person name="Hoffman S.L."/>
            <person name="Newbold C."/>
            <person name="Davis R.W."/>
            <person name="Fraser C.M."/>
            <person name="Barrell B.G."/>
        </authorList>
    </citation>
    <scope>NUCLEOTIDE SEQUENCE [LARGE SCALE GENOMIC DNA]</scope>
    <source>
        <strain>3D7</strain>
    </source>
</reference>
<reference key="3">
    <citation type="journal article" date="2002" name="Nature">
        <title>Sequence of Plasmodium falciparum chromosomes 1, 3-9 and 13.</title>
        <authorList>
            <person name="Hall N."/>
            <person name="Pain A."/>
            <person name="Berriman M."/>
            <person name="Churcher C.M."/>
            <person name="Harris B."/>
            <person name="Harris D."/>
            <person name="Mungall K.L."/>
            <person name="Bowman S."/>
            <person name="Atkin R."/>
            <person name="Baker S."/>
            <person name="Barron A."/>
            <person name="Brooks K."/>
            <person name="Buckee C.O."/>
            <person name="Burrows C."/>
            <person name="Cherevach I."/>
            <person name="Chillingworth C."/>
            <person name="Chillingworth T."/>
            <person name="Christodoulou Z."/>
            <person name="Clark L."/>
            <person name="Clark R."/>
            <person name="Corton C."/>
            <person name="Cronin A."/>
            <person name="Davies R.M."/>
            <person name="Davis P."/>
            <person name="Dear P."/>
            <person name="Dearden F."/>
            <person name="Doggett J."/>
            <person name="Feltwell T."/>
            <person name="Goble A."/>
            <person name="Goodhead I."/>
            <person name="Gwilliam R."/>
            <person name="Hamlin N."/>
            <person name="Hance Z."/>
            <person name="Harper D."/>
            <person name="Hauser H."/>
            <person name="Hornsby T."/>
            <person name="Holroyd S."/>
            <person name="Horrocks P."/>
            <person name="Humphray S."/>
            <person name="Jagels K."/>
            <person name="James K.D."/>
            <person name="Johnson D."/>
            <person name="Kerhornou A."/>
            <person name="Knights A."/>
            <person name="Konfortov B."/>
            <person name="Kyes S."/>
            <person name="Larke N."/>
            <person name="Lawson D."/>
            <person name="Lennard N."/>
            <person name="Line A."/>
            <person name="Maddison M."/>
            <person name="Mclean J."/>
            <person name="Mooney P."/>
            <person name="Moule S."/>
            <person name="Murphy L."/>
            <person name="Oliver K."/>
            <person name="Ormond D."/>
            <person name="Price C."/>
            <person name="Quail M.A."/>
            <person name="Rabbinowitsch E."/>
            <person name="Rajandream M.A."/>
            <person name="Rutter S."/>
            <person name="Rutherford K.M."/>
            <person name="Sanders M."/>
            <person name="Simmonds M."/>
            <person name="Seeger K."/>
            <person name="Sharp S."/>
            <person name="Smith R."/>
            <person name="Squares R."/>
            <person name="Squares S."/>
            <person name="Stevens K."/>
            <person name="Taylor K."/>
            <person name="Tivey A."/>
            <person name="Unwin L."/>
            <person name="Whitehead S."/>
            <person name="Woodward J.R."/>
            <person name="Sulston J.E."/>
            <person name="Craig A."/>
            <person name="Newbold C."/>
            <person name="Barrell B.G."/>
        </authorList>
    </citation>
    <scope>NUCLEOTIDE SEQUENCE [LARGE SCALE GENOMIC DNA]</scope>
    <source>
        <strain>3D7</strain>
    </source>
</reference>
<reference key="4">
    <citation type="journal article" date="2006" name="Acta Crystallogr. D">
        <title>Structure of Plasmodium falciparum dihydroorotate dehydrogenase with a bound inhibitor.</title>
        <authorList>
            <person name="Hurt D.E."/>
            <person name="Widom J."/>
            <person name="Clardy J."/>
        </authorList>
    </citation>
    <scope>X-RAY CRYSTALLOGRAPHY (2.4 ANGSTROMS) OF 158-569 IN COMPLEX WITH FMN; OROTATE AND INHIBITOR</scope>
    <scope>COFACTOR</scope>
    <scope>BIOPHYSICOCHEMICAL PROPERTIES</scope>
</reference>
<reference key="5">
    <citation type="journal article" date="2009" name="J. Biol. Chem.">
        <title>Structural plasticity of malaria dihydroorotate dehydrogenase allows selective binding of diverse chemical scaffolds.</title>
        <authorList>
            <person name="Deng X."/>
            <person name="Gujjar R."/>
            <person name="El Mazouni F."/>
            <person name="Kaminsky W."/>
            <person name="Malmquist N.A."/>
            <person name="Goldsmith E.J."/>
            <person name="Rathod P.K."/>
            <person name="Phillips M.A."/>
        </authorList>
    </citation>
    <scope>X-RAY CRYSTALLOGRAPHY (2.0 ANGSTROMS) OF 158-569 IN COMPLEXES WITH FMN; OROTATE AND INHIBITORS</scope>
    <scope>COFACTOR</scope>
</reference>
<reference key="6">
    <citation type="journal article" date="2010" name="J. Biol. Chem.">
        <title>Novel inhibitors of Plasmodium falciparum dihydroorotate dehydrogenase with anti-malarial activity in the mouse model.</title>
        <authorList>
            <person name="Booker M.L."/>
            <person name="Bastos C.M."/>
            <person name="Kramer M.L."/>
            <person name="Barker R.H. Jr."/>
            <person name="Skerlj R."/>
            <person name="Sidhu A.B."/>
            <person name="Deng X."/>
            <person name="Celatka C."/>
            <person name="Cortese J.F."/>
            <person name="Guerrero Bravo J.E."/>
            <person name="Crespo Llado K.N."/>
            <person name="Serrano A.E."/>
            <person name="Angulo-Barturen I."/>
            <person name="Jimenez-Diaz M.B."/>
            <person name="Viera S."/>
            <person name="Garuti H."/>
            <person name="Wittlin S."/>
            <person name="Papastogiannidis P."/>
            <person name="Lin J.W."/>
            <person name="Janse C.J."/>
            <person name="Khan S.M."/>
            <person name="Duraisingh M."/>
            <person name="Coleman B."/>
            <person name="Goldsmith E.J."/>
            <person name="Phillips M.A."/>
            <person name="Munoz B."/>
            <person name="Wirth D.F."/>
            <person name="Klinger J.D."/>
            <person name="Wiegand R."/>
            <person name="Sybertz E."/>
        </authorList>
    </citation>
    <scope>X-RAY CRYSTALLOGRAPHY (2.3 ANGSTROMS) OF 158-569 IN COMPLEX WITH FMN; OROTATE AND INHIBITOR</scope>
    <scope>COFACTOR</scope>
</reference>
<feature type="transit peptide" description="Mitochondrion" evidence="2">
    <location>
        <begin position="1"/>
        <end position="23"/>
    </location>
</feature>
<feature type="chain" id="PRO_0000029888" description="Dihydroorotate dehydrogenase (quinone), mitochondrial">
    <location>
        <begin position="24"/>
        <end position="569"/>
    </location>
</feature>
<feature type="transmembrane region" description="Helical" evidence="2">
    <location>
        <begin position="143"/>
        <end position="163"/>
    </location>
</feature>
<feature type="active site" description="Nucleophile" evidence="1">
    <location>
        <position position="345"/>
    </location>
</feature>
<feature type="binding site" evidence="3 5">
    <location>
        <begin position="225"/>
        <end position="229"/>
    </location>
    <ligand>
        <name>FMN</name>
        <dbReference type="ChEBI" id="CHEBI:58210"/>
    </ligand>
</feature>
<feature type="binding site">
    <location>
        <position position="229"/>
    </location>
    <ligand>
        <name>substrate</name>
    </ligand>
</feature>
<feature type="binding site" evidence="3 5">
    <location>
        <position position="249"/>
    </location>
    <ligand>
        <name>FMN</name>
        <dbReference type="ChEBI" id="CHEBI:58210"/>
    </ligand>
</feature>
<feature type="binding site">
    <location>
        <begin position="274"/>
        <end position="278"/>
    </location>
    <ligand>
        <name>substrate</name>
    </ligand>
</feature>
<feature type="binding site" evidence="3 5">
    <location>
        <position position="342"/>
    </location>
    <ligand>
        <name>FMN</name>
        <dbReference type="ChEBI" id="CHEBI:58210"/>
    </ligand>
</feature>
<feature type="binding site">
    <location>
        <position position="342"/>
    </location>
    <ligand>
        <name>substrate</name>
    </ligand>
</feature>
<feature type="binding site">
    <location>
        <position position="347"/>
    </location>
    <ligand>
        <name>substrate</name>
    </ligand>
</feature>
<feature type="binding site" evidence="3 5">
    <location>
        <position position="429"/>
    </location>
    <ligand>
        <name>FMN</name>
        <dbReference type="ChEBI" id="CHEBI:58210"/>
    </ligand>
</feature>
<feature type="binding site">
    <location>
        <begin position="458"/>
        <end position="459"/>
    </location>
    <ligand>
        <name>substrate</name>
    </ligand>
</feature>
<feature type="binding site" evidence="3 5">
    <location>
        <begin position="477"/>
        <end position="478"/>
    </location>
    <ligand>
        <name>FMN</name>
        <dbReference type="ChEBI" id="CHEBI:58210"/>
    </ligand>
</feature>
<feature type="binding site" evidence="3 5">
    <location>
        <begin position="505"/>
        <end position="507"/>
    </location>
    <ligand>
        <name>FMN</name>
        <dbReference type="ChEBI" id="CHEBI:58210"/>
    </ligand>
</feature>
<feature type="binding site" evidence="3 5">
    <location>
        <begin position="528"/>
        <end position="529"/>
    </location>
    <ligand>
        <name>FMN</name>
        <dbReference type="ChEBI" id="CHEBI:58210"/>
    </ligand>
</feature>
<feature type="strand" evidence="8">
    <location>
        <begin position="158"/>
        <end position="160"/>
    </location>
</feature>
<feature type="helix" evidence="10">
    <location>
        <begin position="166"/>
        <end position="178"/>
    </location>
</feature>
<feature type="helix" evidence="10">
    <location>
        <begin position="181"/>
        <end position="193"/>
    </location>
</feature>
<feature type="helix" evidence="10">
    <location>
        <begin position="206"/>
        <end position="208"/>
    </location>
</feature>
<feature type="strand" evidence="10">
    <location>
        <begin position="210"/>
        <end position="212"/>
    </location>
</feature>
<feature type="strand" evidence="10">
    <location>
        <begin position="215"/>
        <end position="223"/>
    </location>
</feature>
<feature type="turn" evidence="9">
    <location>
        <begin position="225"/>
        <end position="230"/>
    </location>
</feature>
<feature type="strand" evidence="10">
    <location>
        <begin position="231"/>
        <end position="233"/>
    </location>
</feature>
<feature type="helix" evidence="10">
    <location>
        <begin position="234"/>
        <end position="238"/>
    </location>
</feature>
<feature type="turn" evidence="10">
    <location>
        <begin position="239"/>
        <end position="241"/>
    </location>
</feature>
<feature type="strand" evidence="10">
    <location>
        <begin position="243"/>
        <end position="250"/>
    </location>
</feature>
<feature type="strand" evidence="7">
    <location>
        <begin position="252"/>
        <end position="255"/>
    </location>
</feature>
<feature type="strand" evidence="10">
    <location>
        <begin position="263"/>
        <end position="266"/>
    </location>
</feature>
<feature type="turn" evidence="10">
    <location>
        <begin position="267"/>
        <end position="270"/>
    </location>
</feature>
<feature type="strand" evidence="10">
    <location>
        <begin position="271"/>
        <end position="274"/>
    </location>
</feature>
<feature type="strand" evidence="7">
    <location>
        <begin position="280"/>
        <end position="282"/>
    </location>
</feature>
<feature type="helix" evidence="10">
    <location>
        <begin position="283"/>
        <end position="298"/>
    </location>
</feature>
<feature type="helix" evidence="10">
    <location>
        <begin position="301"/>
        <end position="303"/>
    </location>
</feature>
<feature type="strand" evidence="10">
    <location>
        <begin position="307"/>
        <end position="312"/>
    </location>
</feature>
<feature type="helix" evidence="10">
    <location>
        <begin position="321"/>
        <end position="332"/>
    </location>
</feature>
<feature type="helix" evidence="10">
    <location>
        <begin position="333"/>
        <end position="335"/>
    </location>
</feature>
<feature type="strand" evidence="10">
    <location>
        <begin position="337"/>
        <end position="342"/>
    </location>
</feature>
<feature type="strand" evidence="9">
    <location>
        <begin position="346"/>
        <end position="348"/>
    </location>
</feature>
<feature type="helix" evidence="10">
    <location>
        <begin position="351"/>
        <end position="355"/>
    </location>
</feature>
<feature type="helix" evidence="10">
    <location>
        <begin position="357"/>
        <end position="376"/>
    </location>
</feature>
<feature type="turn" evidence="9">
    <location>
        <begin position="378"/>
        <end position="380"/>
    </location>
</feature>
<feature type="strand" evidence="10">
    <location>
        <begin position="381"/>
        <end position="383"/>
    </location>
</feature>
<feature type="strand" evidence="10">
    <location>
        <begin position="418"/>
        <end position="422"/>
    </location>
</feature>
<feature type="strand" evidence="10">
    <location>
        <begin position="425"/>
        <end position="430"/>
    </location>
</feature>
<feature type="helix" evidence="10">
    <location>
        <begin position="436"/>
        <end position="449"/>
    </location>
</feature>
<feature type="strand" evidence="10">
    <location>
        <begin position="452"/>
        <end position="456"/>
    </location>
</feature>
<feature type="helix" evidence="10">
    <location>
        <begin position="467"/>
        <end position="469"/>
    </location>
</feature>
<feature type="strand" evidence="10">
    <location>
        <begin position="474"/>
        <end position="478"/>
    </location>
</feature>
<feature type="helix" evidence="10">
    <location>
        <begin position="479"/>
        <end position="481"/>
    </location>
</feature>
<feature type="helix" evidence="10">
    <location>
        <begin position="482"/>
        <end position="495"/>
    </location>
</feature>
<feature type="turn" evidence="10">
    <location>
        <begin position="496"/>
        <end position="498"/>
    </location>
</feature>
<feature type="strand" evidence="10">
    <location>
        <begin position="502"/>
        <end position="507"/>
    </location>
</feature>
<feature type="helix" evidence="10">
    <location>
        <begin position="511"/>
        <end position="520"/>
    </location>
</feature>
<feature type="strand" evidence="10">
    <location>
        <begin position="522"/>
        <end position="528"/>
    </location>
</feature>
<feature type="helix" evidence="10">
    <location>
        <begin position="529"/>
        <end position="534"/>
    </location>
</feature>
<feature type="helix" evidence="10">
    <location>
        <begin position="535"/>
        <end position="537"/>
    </location>
</feature>
<feature type="helix" evidence="10">
    <location>
        <begin position="538"/>
        <end position="553"/>
    </location>
</feature>
<feature type="strand" evidence="10">
    <location>
        <begin position="556"/>
        <end position="558"/>
    </location>
</feature>
<feature type="helix" evidence="10">
    <location>
        <begin position="559"/>
        <end position="561"/>
    </location>
</feature>
<feature type="turn" evidence="10">
    <location>
        <begin position="562"/>
        <end position="565"/>
    </location>
</feature>
<proteinExistence type="evidence at protein level"/>
<gene>
    <name type="ORF">PFF0160c</name>
</gene>
<sequence>MISKLKPQFMFLPKKHILSYCRKDVLNLFEQKFYYTSKRKESNNMKNESLLRLINYNRYYNKIDSNNYYNGGKILSNDRQYIYSPLCEYKKKINDISSYVSVPFKINIRNLGTSNFVNNKKDVLDNDYIYENIKKEKSKHKKIIFLLFVSLFGLYGFFESYNPEFFLYDIFLKFCLKYIDGEICHDLFLLLGKYNILPYDTSNDSIYACTNIKHLDFINPFGVAAGFDKNGVCIDSILKLGFSFIEIGTITPRGQTGNAKPRIFRDVESRSIINSCGFNNMGCDKVTENLILFRKRQEEDKLLSKHIVGVSIGKNKDTVNIVDDLKYCINKIGRYADYIAINVSSPNTPGLRDNQEAGKLKNIILSVKEEIDNLEKNNIMNDESTYNEDNKIVEKKNNFNKNNSHMMKDAKDNFLWFNTTKKKPLVFVKLAPDLNQEQKKEIADVLLETNIDGMIISNTTTQINDIKSFENKKGGVSGAKLKDISTKFICEMYNYTNKQIPIIASGGIFSGLDALEKIEAGASVCQLYSCLVFNGMKSAVQIKRELNHLLYQRGYYNLKEAIGRKHSKS</sequence>
<keyword id="KW-0002">3D-structure</keyword>
<keyword id="KW-0285">Flavoprotein</keyword>
<keyword id="KW-0288">FMN</keyword>
<keyword id="KW-0472">Membrane</keyword>
<keyword id="KW-0496">Mitochondrion</keyword>
<keyword id="KW-0999">Mitochondrion inner membrane</keyword>
<keyword id="KW-0560">Oxidoreductase</keyword>
<keyword id="KW-0665">Pyrimidine biosynthesis</keyword>
<keyword id="KW-1185">Reference proteome</keyword>
<keyword id="KW-0809">Transit peptide</keyword>
<keyword id="KW-0812">Transmembrane</keyword>
<keyword id="KW-1133">Transmembrane helix</keyword>
<protein>
    <recommendedName>
        <fullName>Dihydroorotate dehydrogenase (quinone), mitochondrial</fullName>
        <shortName>DHOdehase</shortName>
        <ecNumber>1.3.5.2</ecNumber>
    </recommendedName>
    <alternativeName>
        <fullName>Dihydroorotate oxidase</fullName>
    </alternativeName>
</protein>
<dbReference type="EC" id="1.3.5.2"/>
<dbReference type="EMBL" id="L15446">
    <property type="protein sequence ID" value="AAC37170.1"/>
    <property type="molecule type" value="Unassigned_DNA"/>
</dbReference>
<dbReference type="EMBL" id="AL844505">
    <property type="protein sequence ID" value="CAG25203.1"/>
    <property type="molecule type" value="Genomic_DNA"/>
</dbReference>
<dbReference type="RefSeq" id="XP_966023.1">
    <property type="nucleotide sequence ID" value="XM_960930.1"/>
</dbReference>
<dbReference type="PDB" id="1TV5">
    <property type="method" value="X-ray"/>
    <property type="resolution" value="2.40 A"/>
    <property type="chains" value="A=158-569"/>
</dbReference>
<dbReference type="PDB" id="3I65">
    <property type="method" value="X-ray"/>
    <property type="resolution" value="2.00 A"/>
    <property type="chains" value="A=158-569"/>
</dbReference>
<dbReference type="PDB" id="3I68">
    <property type="method" value="X-ray"/>
    <property type="resolution" value="2.40 A"/>
    <property type="chains" value="A=158-569"/>
</dbReference>
<dbReference type="PDB" id="3I6R">
    <property type="method" value="X-ray"/>
    <property type="resolution" value="2.50 A"/>
    <property type="chains" value="A=158-569"/>
</dbReference>
<dbReference type="PDB" id="3O8A">
    <property type="method" value="X-ray"/>
    <property type="resolution" value="2.30 A"/>
    <property type="chains" value="A=158-569"/>
</dbReference>
<dbReference type="PDB" id="3SFK">
    <property type="method" value="X-ray"/>
    <property type="resolution" value="2.95 A"/>
    <property type="chains" value="A=158-569"/>
</dbReference>
<dbReference type="PDB" id="4CQ8">
    <property type="method" value="X-ray"/>
    <property type="resolution" value="1.98 A"/>
    <property type="chains" value="A/B=158-569"/>
</dbReference>
<dbReference type="PDB" id="4CQ9">
    <property type="method" value="X-ray"/>
    <property type="resolution" value="2.72 A"/>
    <property type="chains" value="A/B=158-569"/>
</dbReference>
<dbReference type="PDB" id="4CQA">
    <property type="method" value="X-ray"/>
    <property type="resolution" value="2.82 A"/>
    <property type="chains" value="A/B=158-569"/>
</dbReference>
<dbReference type="PDB" id="4ORM">
    <property type="method" value="X-ray"/>
    <property type="resolution" value="2.07 A"/>
    <property type="chains" value="A=158-569"/>
</dbReference>
<dbReference type="PDB" id="4RX0">
    <property type="method" value="X-ray"/>
    <property type="resolution" value="2.25 A"/>
    <property type="chains" value="A=158-569"/>
</dbReference>
<dbReference type="PDB" id="5BOO">
    <property type="method" value="X-ray"/>
    <property type="resolution" value="2.80 A"/>
    <property type="chains" value="A/B=158-569"/>
</dbReference>
<dbReference type="PDB" id="5DEL">
    <property type="method" value="X-ray"/>
    <property type="resolution" value="2.20 A"/>
    <property type="chains" value="A=158-569"/>
</dbReference>
<dbReference type="PDB" id="5FI8">
    <property type="method" value="X-ray"/>
    <property type="resolution" value="2.32 A"/>
    <property type="chains" value="A=158-569"/>
</dbReference>
<dbReference type="PDB" id="5TBO">
    <property type="method" value="X-ray"/>
    <property type="resolution" value="2.15 A"/>
    <property type="chains" value="A=158-569"/>
</dbReference>
<dbReference type="PDB" id="6E0B">
    <property type="method" value="X-ray"/>
    <property type="resolution" value="2.10 A"/>
    <property type="chains" value="A=158-569"/>
</dbReference>
<dbReference type="PDB" id="6GJG">
    <property type="method" value="X-ray"/>
    <property type="resolution" value="1.99 A"/>
    <property type="chains" value="A/B=158-569"/>
</dbReference>
<dbReference type="PDB" id="6I4B">
    <property type="method" value="X-ray"/>
    <property type="resolution" value="1.98 A"/>
    <property type="chains" value="A/B=158-569"/>
</dbReference>
<dbReference type="PDB" id="6VTN">
    <property type="method" value="X-ray"/>
    <property type="resolution" value="2.25 A"/>
    <property type="chains" value="A=158-569"/>
</dbReference>
<dbReference type="PDB" id="6VTY">
    <property type="method" value="X-ray"/>
    <property type="resolution" value="1.78 A"/>
    <property type="chains" value="A/B/C/D=158-569"/>
</dbReference>
<dbReference type="PDB" id="7KYK">
    <property type="method" value="X-ray"/>
    <property type="resolution" value="2.15 A"/>
    <property type="chains" value="A/B/C/D=158-569"/>
</dbReference>
<dbReference type="PDB" id="7KYV">
    <property type="method" value="X-ray"/>
    <property type="resolution" value="2.40 A"/>
    <property type="chains" value="A=158-569"/>
</dbReference>
<dbReference type="PDB" id="7KYY">
    <property type="method" value="X-ray"/>
    <property type="resolution" value="2.00 A"/>
    <property type="chains" value="A/B/C/D=158-569"/>
</dbReference>
<dbReference type="PDB" id="7KZ4">
    <property type="method" value="X-ray"/>
    <property type="resolution" value="1.75 A"/>
    <property type="chains" value="A/B=158-569"/>
</dbReference>
<dbReference type="PDB" id="7KZY">
    <property type="method" value="X-ray"/>
    <property type="resolution" value="1.75 A"/>
    <property type="chains" value="A/B=158-569"/>
</dbReference>
<dbReference type="PDB" id="7L01">
    <property type="method" value="X-ray"/>
    <property type="resolution" value="1.60 A"/>
    <property type="chains" value="A/B=158-569"/>
</dbReference>
<dbReference type="PDB" id="7L0K">
    <property type="method" value="X-ray"/>
    <property type="resolution" value="1.96 A"/>
    <property type="chains" value="A/B=158-569"/>
</dbReference>
<dbReference type="PDB" id="7S87">
    <property type="method" value="X-ray"/>
    <property type="resolution" value="2.75 A"/>
    <property type="chains" value="A/B=158-569"/>
</dbReference>
<dbReference type="PDB" id="7WYF">
    <property type="method" value="X-ray"/>
    <property type="resolution" value="3.30 A"/>
    <property type="chains" value="A=158-569"/>
</dbReference>
<dbReference type="PDB" id="9DI6">
    <property type="method" value="X-ray"/>
    <property type="resolution" value="2.41 A"/>
    <property type="chains" value="A=158-569"/>
</dbReference>
<dbReference type="PDB" id="9DIK">
    <property type="method" value="X-ray"/>
    <property type="resolution" value="2.10 A"/>
    <property type="chains" value="A/B=158-569"/>
</dbReference>
<dbReference type="PDB" id="9DIZ">
    <property type="method" value="X-ray"/>
    <property type="resolution" value="3.10 A"/>
    <property type="chains" value="A=158-569"/>
</dbReference>
<dbReference type="PDB" id="9DKO">
    <property type="method" value="X-ray"/>
    <property type="resolution" value="3.00 A"/>
    <property type="chains" value="A=158-569"/>
</dbReference>
<dbReference type="PDB" id="9DKQ">
    <property type="method" value="X-ray"/>
    <property type="resolution" value="3.15 A"/>
    <property type="chains" value="A=158-569"/>
</dbReference>
<dbReference type="PDB" id="9DKY">
    <property type="method" value="X-ray"/>
    <property type="resolution" value="3.30 A"/>
    <property type="chains" value="A=158-569"/>
</dbReference>
<dbReference type="PDB" id="9DLK">
    <property type="method" value="X-ray"/>
    <property type="resolution" value="2.90 A"/>
    <property type="chains" value="A=158-569"/>
</dbReference>
<dbReference type="PDB" id="9DLY">
    <property type="method" value="X-ray"/>
    <property type="resolution" value="3.10 A"/>
    <property type="chains" value="A=158-569"/>
</dbReference>
<dbReference type="PDBsum" id="1TV5"/>
<dbReference type="PDBsum" id="3I65"/>
<dbReference type="PDBsum" id="3I68"/>
<dbReference type="PDBsum" id="3I6R"/>
<dbReference type="PDBsum" id="3O8A"/>
<dbReference type="PDBsum" id="3SFK"/>
<dbReference type="PDBsum" id="4CQ8"/>
<dbReference type="PDBsum" id="4CQ9"/>
<dbReference type="PDBsum" id="4CQA"/>
<dbReference type="PDBsum" id="4ORM"/>
<dbReference type="PDBsum" id="4RX0"/>
<dbReference type="PDBsum" id="5BOO"/>
<dbReference type="PDBsum" id="5DEL"/>
<dbReference type="PDBsum" id="5FI8"/>
<dbReference type="PDBsum" id="5TBO"/>
<dbReference type="PDBsum" id="6E0B"/>
<dbReference type="PDBsum" id="6GJG"/>
<dbReference type="PDBsum" id="6I4B"/>
<dbReference type="PDBsum" id="6VTN"/>
<dbReference type="PDBsum" id="6VTY"/>
<dbReference type="PDBsum" id="7KYK"/>
<dbReference type="PDBsum" id="7KYV"/>
<dbReference type="PDBsum" id="7KYY"/>
<dbReference type="PDBsum" id="7KZ4"/>
<dbReference type="PDBsum" id="7KZY"/>
<dbReference type="PDBsum" id="7L01"/>
<dbReference type="PDBsum" id="7L0K"/>
<dbReference type="PDBsum" id="7S87"/>
<dbReference type="PDBsum" id="7WYF"/>
<dbReference type="PDBsum" id="9DI6"/>
<dbReference type="PDBsum" id="9DIK"/>
<dbReference type="PDBsum" id="9DIZ"/>
<dbReference type="PDBsum" id="9DKO"/>
<dbReference type="PDBsum" id="9DKQ"/>
<dbReference type="PDBsum" id="9DKY"/>
<dbReference type="PDBsum" id="9DLK"/>
<dbReference type="PDBsum" id="9DLY"/>
<dbReference type="SMR" id="Q08210"/>
<dbReference type="FunCoup" id="Q08210">
    <property type="interactions" value="300"/>
</dbReference>
<dbReference type="STRING" id="36329.Q08210"/>
<dbReference type="BindingDB" id="Q08210"/>
<dbReference type="ChEMBL" id="CHEMBL3588732"/>
<dbReference type="DrugBank" id="DB07443">
    <property type="generic name" value="(2Z)-N-biphenyl-4-yl-2-cyano-3-hydroxybut-2-enamide"/>
</dbReference>
<dbReference type="DrugBank" id="DB08249">
    <property type="generic name" value="3,6,9,12,15-PENTAOXATRICOSAN-1-OL"/>
</dbReference>
<dbReference type="DrugBank" id="DB14511">
    <property type="generic name" value="Acetate"/>
</dbReference>
<dbReference type="DrugBank" id="DB13132">
    <property type="generic name" value="Artemisinin"/>
</dbReference>
<dbReference type="DrugBank" id="DB01117">
    <property type="generic name" value="Atovaquone"/>
</dbReference>
<dbReference type="DrugBank" id="DB02613">
    <property type="generic name" value="Capric dimethyl amine oxide"/>
</dbReference>
<dbReference type="DrugBank" id="DB04147">
    <property type="generic name" value="Dodecyldimethylamine N-oxide"/>
</dbReference>
<dbReference type="DrugBank" id="DB08960">
    <property type="generic name" value="Hexamethonium"/>
</dbReference>
<dbReference type="DrugBank" id="DB01097">
    <property type="generic name" value="Leflunomide"/>
</dbReference>
<dbReference type="DrugBank" id="DB02262">
    <property type="generic name" value="Orotic acid"/>
</dbReference>
<dbReference type="DrugBank" id="DB13596">
    <property type="generic name" value="Oxycinchophen"/>
</dbReference>
<dbReference type="DrugBank" id="DB17048">
    <property type="generic name" value="Plumbagin"/>
</dbReference>
<dbReference type="DrugBank" id="DB03819">
    <property type="generic name" value="Salicylhydroxamic Acid"/>
</dbReference>
<dbReference type="DrugBank" id="DB08880">
    <property type="generic name" value="Teriflunomide"/>
</dbReference>
<dbReference type="DrugBank" id="DB07646">
    <property type="generic name" value="UNDECYLAMINE-N,N-DIMETHYL-N-OXIDE"/>
</dbReference>
<dbReference type="DrugCentral" id="Q08210"/>
<dbReference type="GuidetoPHARMACOLOGY" id="2949"/>
<dbReference type="PaxDb" id="5833-PFF0160c"/>
<dbReference type="EnsemblProtists" id="CAG25203">
    <property type="protein sequence ID" value="CAG25203"/>
    <property type="gene ID" value="PF3D7_0603300"/>
</dbReference>
<dbReference type="KEGG" id="pfa:PF3D7_0603300"/>
<dbReference type="VEuPathDB" id="PlasmoDB:PF3D7_0603300"/>
<dbReference type="HOGENOM" id="CLU_013640_0_1_1"/>
<dbReference type="InParanoid" id="Q08210"/>
<dbReference type="OMA" id="IYGTDTR"/>
<dbReference type="OrthoDB" id="14784at2759"/>
<dbReference type="PhylomeDB" id="Q08210"/>
<dbReference type="Reactome" id="R-PFA-500753">
    <property type="pathway name" value="Pyrimidine biosynthesis"/>
</dbReference>
<dbReference type="UniPathway" id="UPA00070">
    <property type="reaction ID" value="UER00946"/>
</dbReference>
<dbReference type="EvolutionaryTrace" id="Q08210"/>
<dbReference type="Proteomes" id="UP000001450">
    <property type="component" value="Chromosome 6"/>
</dbReference>
<dbReference type="GO" id="GO:0005743">
    <property type="term" value="C:mitochondrial inner membrane"/>
    <property type="evidence" value="ECO:0000314"/>
    <property type="project" value="GeneDB"/>
</dbReference>
<dbReference type="GO" id="GO:0106430">
    <property type="term" value="F:dihydroorotate dehydrogenase (quinone) activity"/>
    <property type="evidence" value="ECO:0007669"/>
    <property type="project" value="UniProtKB-EC"/>
</dbReference>
<dbReference type="GO" id="GO:0004152">
    <property type="term" value="F:dihydroorotate dehydrogenase activity"/>
    <property type="evidence" value="ECO:0000314"/>
    <property type="project" value="GeneDB"/>
</dbReference>
<dbReference type="GO" id="GO:0006207">
    <property type="term" value="P:'de novo' pyrimidine nucleobase biosynthetic process"/>
    <property type="evidence" value="ECO:0000314"/>
    <property type="project" value="GeneDB"/>
</dbReference>
<dbReference type="GO" id="GO:0044205">
    <property type="term" value="P:'de novo' UMP biosynthetic process"/>
    <property type="evidence" value="ECO:0007669"/>
    <property type="project" value="UniProtKB-UniPathway"/>
</dbReference>
<dbReference type="GO" id="GO:0009220">
    <property type="term" value="P:pyrimidine ribonucleotide biosynthetic process"/>
    <property type="evidence" value="ECO:0000318"/>
    <property type="project" value="GO_Central"/>
</dbReference>
<dbReference type="CDD" id="cd04738">
    <property type="entry name" value="DHOD_2_like"/>
    <property type="match status" value="1"/>
</dbReference>
<dbReference type="Gene3D" id="3.20.20.70">
    <property type="entry name" value="Aldolase class I"/>
    <property type="match status" value="1"/>
</dbReference>
<dbReference type="InterPro" id="IPR013785">
    <property type="entry name" value="Aldolase_TIM"/>
</dbReference>
<dbReference type="InterPro" id="IPR050074">
    <property type="entry name" value="DHO_dehydrogenase"/>
</dbReference>
<dbReference type="InterPro" id="IPR005719">
    <property type="entry name" value="Dihydroorotate_DH_2"/>
</dbReference>
<dbReference type="InterPro" id="IPR005720">
    <property type="entry name" value="Dihydroorotate_DH_cat"/>
</dbReference>
<dbReference type="InterPro" id="IPR001295">
    <property type="entry name" value="Dihydroorotate_DH_CS"/>
</dbReference>
<dbReference type="NCBIfam" id="NF003652">
    <property type="entry name" value="PRK05286.2-5"/>
    <property type="match status" value="1"/>
</dbReference>
<dbReference type="PANTHER" id="PTHR48109:SF4">
    <property type="entry name" value="DIHYDROOROTATE DEHYDROGENASE (QUINONE), MITOCHONDRIAL"/>
    <property type="match status" value="1"/>
</dbReference>
<dbReference type="PANTHER" id="PTHR48109">
    <property type="entry name" value="DIHYDROOROTATE DEHYDROGENASE (QUINONE), MITOCHONDRIAL-RELATED"/>
    <property type="match status" value="1"/>
</dbReference>
<dbReference type="Pfam" id="PF01180">
    <property type="entry name" value="DHO_dh"/>
    <property type="match status" value="1"/>
</dbReference>
<dbReference type="SUPFAM" id="SSF51395">
    <property type="entry name" value="FMN-linked oxidoreductases"/>
    <property type="match status" value="1"/>
</dbReference>
<dbReference type="PROSITE" id="PS00911">
    <property type="entry name" value="DHODEHASE_1"/>
    <property type="match status" value="1"/>
</dbReference>
<dbReference type="PROSITE" id="PS00912">
    <property type="entry name" value="DHODEHASE_2"/>
    <property type="match status" value="1"/>
</dbReference>
<organism>
    <name type="scientific">Plasmodium falciparum (isolate 3D7)</name>
    <dbReference type="NCBI Taxonomy" id="36329"/>
    <lineage>
        <taxon>Eukaryota</taxon>
        <taxon>Sar</taxon>
        <taxon>Alveolata</taxon>
        <taxon>Apicomplexa</taxon>
        <taxon>Aconoidasida</taxon>
        <taxon>Haemosporida</taxon>
        <taxon>Plasmodiidae</taxon>
        <taxon>Plasmodium</taxon>
        <taxon>Plasmodium (Laverania)</taxon>
    </lineage>
</organism>
<evidence type="ECO:0000250" key="1"/>
<evidence type="ECO:0000255" key="2"/>
<evidence type="ECO:0000269" key="3">
    <source>
    </source>
</evidence>
<evidence type="ECO:0000269" key="4">
    <source>
    </source>
</evidence>
<evidence type="ECO:0000269" key="5">
    <source>
    </source>
</evidence>
<evidence type="ECO:0000305" key="6"/>
<evidence type="ECO:0007829" key="7">
    <source>
        <dbReference type="PDB" id="7KYK"/>
    </source>
</evidence>
<evidence type="ECO:0007829" key="8">
    <source>
        <dbReference type="PDB" id="7KYY"/>
    </source>
</evidence>
<evidence type="ECO:0007829" key="9">
    <source>
        <dbReference type="PDB" id="7KZ4"/>
    </source>
</evidence>
<evidence type="ECO:0007829" key="10">
    <source>
        <dbReference type="PDB" id="7L01"/>
    </source>
</evidence>
<name>PYRD_PLAF7</name>
<accession>Q08210</accession>
<accession>Q6LFN3</accession>
<comment type="function">
    <text>Catalyzes the conversion of dihydroorotate to orotate with quinone as electron acceptor.</text>
</comment>
<comment type="catalytic activity">
    <reaction>
        <text>(S)-dihydroorotate + a quinone = orotate + a quinol</text>
        <dbReference type="Rhea" id="RHEA:30187"/>
        <dbReference type="ChEBI" id="CHEBI:24646"/>
        <dbReference type="ChEBI" id="CHEBI:30839"/>
        <dbReference type="ChEBI" id="CHEBI:30864"/>
        <dbReference type="ChEBI" id="CHEBI:132124"/>
        <dbReference type="EC" id="1.3.5.2"/>
    </reaction>
</comment>
<comment type="cofactor">
    <cofactor evidence="3 4 5">
        <name>FMN</name>
        <dbReference type="ChEBI" id="CHEBI:58210"/>
    </cofactor>
    <text evidence="3 4 5">Binds 1 FMN per subunit.</text>
</comment>
<comment type="biophysicochemical properties">
    <kinetics>
        <KM evidence="3">13.1 uM for 2,3-dimethoxy-5-methyl-6-(3-methyl-2-butenyl)-1,4-benzoquinone (CoQ(1))</KM>
    </kinetics>
</comment>
<comment type="pathway">
    <text>Pyrimidine metabolism; UMP biosynthesis via de novo pathway; orotate from (S)-dihydroorotate (quinone route): step 1/1.</text>
</comment>
<comment type="subunit">
    <text evidence="1">Monomer.</text>
</comment>
<comment type="subcellular location">
    <subcellularLocation>
        <location evidence="1">Mitochondrion inner membrane</location>
        <topology evidence="6">Single-pass membrane protein</topology>
    </subcellularLocation>
</comment>
<comment type="similarity">
    <text evidence="6">Belongs to the dihydroorotate dehydrogenase family. Type 2 subfamily.</text>
</comment>